<proteinExistence type="inferred from homology"/>
<sequence length="275" mass="29142">MTDTHLITTIDTAWDNRDSVSTDTTGEVRDAVETAINLLDSGKARVASRGDDGHWVVHQWLKKAVLLGFRLNPMDLIEGGIAGAKWWDKVPSKFEGWGEAEFKAAGFRAVPPCAVRRGAFIAPGAVLMPSYVNLGAYVGEGTMIDTWASVGSCAQVGANCHISAGTGIGGVLEPLQADPVIIEDNCFIGARSEVVEGVIVREGSVLAMGVYITRSTKIVDRASGEISYGEVPAYSVVVPGALPDPKGGPSLYCAVIVKRVDAQTRAKTSINDLLR</sequence>
<keyword id="KW-0012">Acyltransferase</keyword>
<keyword id="KW-0028">Amino-acid biosynthesis</keyword>
<keyword id="KW-0963">Cytoplasm</keyword>
<keyword id="KW-0220">Diaminopimelate biosynthesis</keyword>
<keyword id="KW-0457">Lysine biosynthesis</keyword>
<keyword id="KW-1185">Reference proteome</keyword>
<keyword id="KW-0677">Repeat</keyword>
<keyword id="KW-0808">Transferase</keyword>
<organism>
    <name type="scientific">Maricaulis maris (strain MCS10)</name>
    <name type="common">Caulobacter maris</name>
    <dbReference type="NCBI Taxonomy" id="394221"/>
    <lineage>
        <taxon>Bacteria</taxon>
        <taxon>Pseudomonadati</taxon>
        <taxon>Pseudomonadota</taxon>
        <taxon>Alphaproteobacteria</taxon>
        <taxon>Maricaulales</taxon>
        <taxon>Maricaulaceae</taxon>
        <taxon>Maricaulis</taxon>
    </lineage>
</organism>
<name>DAPD_MARMM</name>
<evidence type="ECO:0000255" key="1">
    <source>
        <dbReference type="HAMAP-Rule" id="MF_00811"/>
    </source>
</evidence>
<dbReference type="EC" id="2.3.1.117" evidence="1"/>
<dbReference type="EMBL" id="CP000449">
    <property type="protein sequence ID" value="ABI64747.1"/>
    <property type="molecule type" value="Genomic_DNA"/>
</dbReference>
<dbReference type="RefSeq" id="WP_011642394.1">
    <property type="nucleotide sequence ID" value="NC_008347.1"/>
</dbReference>
<dbReference type="SMR" id="Q0ASJ0"/>
<dbReference type="STRING" id="394221.Mmar10_0454"/>
<dbReference type="KEGG" id="mmr:Mmar10_0454"/>
<dbReference type="eggNOG" id="COG2171">
    <property type="taxonomic scope" value="Bacteria"/>
</dbReference>
<dbReference type="HOGENOM" id="CLU_050859_0_1_5"/>
<dbReference type="OrthoDB" id="9775362at2"/>
<dbReference type="UniPathway" id="UPA00034">
    <property type="reaction ID" value="UER00019"/>
</dbReference>
<dbReference type="Proteomes" id="UP000001964">
    <property type="component" value="Chromosome"/>
</dbReference>
<dbReference type="GO" id="GO:0005737">
    <property type="term" value="C:cytoplasm"/>
    <property type="evidence" value="ECO:0007669"/>
    <property type="project" value="UniProtKB-SubCell"/>
</dbReference>
<dbReference type="GO" id="GO:0008666">
    <property type="term" value="F:2,3,4,5-tetrahydropyridine-2,6-dicarboxylate N-succinyltransferase activity"/>
    <property type="evidence" value="ECO:0007669"/>
    <property type="project" value="UniProtKB-UniRule"/>
</dbReference>
<dbReference type="GO" id="GO:0019877">
    <property type="term" value="P:diaminopimelate biosynthetic process"/>
    <property type="evidence" value="ECO:0007669"/>
    <property type="project" value="UniProtKB-UniRule"/>
</dbReference>
<dbReference type="GO" id="GO:0009089">
    <property type="term" value="P:lysine biosynthetic process via diaminopimelate"/>
    <property type="evidence" value="ECO:0007669"/>
    <property type="project" value="UniProtKB-UniRule"/>
</dbReference>
<dbReference type="CDD" id="cd03350">
    <property type="entry name" value="LbH_THP_succinylT"/>
    <property type="match status" value="1"/>
</dbReference>
<dbReference type="Gene3D" id="2.160.10.10">
    <property type="entry name" value="Hexapeptide repeat proteins"/>
    <property type="match status" value="1"/>
</dbReference>
<dbReference type="Gene3D" id="1.10.166.10">
    <property type="entry name" value="Tetrahydrodipicolinate-N-succinyltransferase, N-terminal domain"/>
    <property type="match status" value="1"/>
</dbReference>
<dbReference type="HAMAP" id="MF_00811">
    <property type="entry name" value="DapD"/>
    <property type="match status" value="1"/>
</dbReference>
<dbReference type="InterPro" id="IPR005664">
    <property type="entry name" value="DapD_Trfase_Hexpep_rpt_fam"/>
</dbReference>
<dbReference type="InterPro" id="IPR001451">
    <property type="entry name" value="Hexapep"/>
</dbReference>
<dbReference type="InterPro" id="IPR023180">
    <property type="entry name" value="THP_succinylTrfase_dom1"/>
</dbReference>
<dbReference type="InterPro" id="IPR037133">
    <property type="entry name" value="THP_succinylTrfase_N_sf"/>
</dbReference>
<dbReference type="InterPro" id="IPR050179">
    <property type="entry name" value="Trans_hexapeptide_repeat"/>
</dbReference>
<dbReference type="InterPro" id="IPR011004">
    <property type="entry name" value="Trimer_LpxA-like_sf"/>
</dbReference>
<dbReference type="NCBIfam" id="TIGR00965">
    <property type="entry name" value="dapD"/>
    <property type="match status" value="1"/>
</dbReference>
<dbReference type="NCBIfam" id="NF008808">
    <property type="entry name" value="PRK11830.1"/>
    <property type="match status" value="1"/>
</dbReference>
<dbReference type="PANTHER" id="PTHR43300:SF10">
    <property type="entry name" value="2,3,4,5-TETRAHYDROPYRIDINE-2,6-DICARBOXYLATE N-ACETYLTRANSFERASE"/>
    <property type="match status" value="1"/>
</dbReference>
<dbReference type="PANTHER" id="PTHR43300">
    <property type="entry name" value="ACETYLTRANSFERASE"/>
    <property type="match status" value="1"/>
</dbReference>
<dbReference type="Pfam" id="PF00132">
    <property type="entry name" value="Hexapep"/>
    <property type="match status" value="1"/>
</dbReference>
<dbReference type="Pfam" id="PF14602">
    <property type="entry name" value="Hexapep_2"/>
    <property type="match status" value="1"/>
</dbReference>
<dbReference type="Pfam" id="PF14805">
    <property type="entry name" value="THDPS_N_2"/>
    <property type="match status" value="1"/>
</dbReference>
<dbReference type="SUPFAM" id="SSF51161">
    <property type="entry name" value="Trimeric LpxA-like enzymes"/>
    <property type="match status" value="1"/>
</dbReference>
<reference key="1">
    <citation type="submission" date="2006-08" db="EMBL/GenBank/DDBJ databases">
        <title>Complete sequence of Maricaulis maris MCS10.</title>
        <authorList>
            <consortium name="US DOE Joint Genome Institute"/>
            <person name="Copeland A."/>
            <person name="Lucas S."/>
            <person name="Lapidus A."/>
            <person name="Barry K."/>
            <person name="Detter J.C."/>
            <person name="Glavina del Rio T."/>
            <person name="Hammon N."/>
            <person name="Israni S."/>
            <person name="Dalin E."/>
            <person name="Tice H."/>
            <person name="Pitluck S."/>
            <person name="Saunders E."/>
            <person name="Brettin T."/>
            <person name="Bruce D."/>
            <person name="Han C."/>
            <person name="Tapia R."/>
            <person name="Gilna P."/>
            <person name="Schmutz J."/>
            <person name="Larimer F."/>
            <person name="Land M."/>
            <person name="Hauser L."/>
            <person name="Kyrpides N."/>
            <person name="Mikhailova N."/>
            <person name="Viollier P."/>
            <person name="Stephens C."/>
            <person name="Richardson P."/>
        </authorList>
    </citation>
    <scope>NUCLEOTIDE SEQUENCE [LARGE SCALE GENOMIC DNA]</scope>
    <source>
        <strain>MCS10</strain>
    </source>
</reference>
<accession>Q0ASJ0</accession>
<protein>
    <recommendedName>
        <fullName evidence="1">2,3,4,5-tetrahydropyridine-2,6-dicarboxylate N-succinyltransferase</fullName>
        <ecNumber evidence="1">2.3.1.117</ecNumber>
    </recommendedName>
    <alternativeName>
        <fullName evidence="1">Tetrahydrodipicolinate N-succinyltransferase</fullName>
        <shortName evidence="1">THDP succinyltransferase</shortName>
        <shortName evidence="1">THP succinyltransferase</shortName>
        <shortName evidence="1">Tetrahydropicolinate succinylase</shortName>
    </alternativeName>
</protein>
<feature type="chain" id="PRO_1000047150" description="2,3,4,5-tetrahydropyridine-2,6-dicarboxylate N-succinyltransferase">
    <location>
        <begin position="1"/>
        <end position="275"/>
    </location>
</feature>
<feature type="binding site" evidence="1">
    <location>
        <position position="108"/>
    </location>
    <ligand>
        <name>substrate</name>
    </ligand>
</feature>
<feature type="binding site" evidence="1">
    <location>
        <position position="145"/>
    </location>
    <ligand>
        <name>substrate</name>
    </ligand>
</feature>
<gene>
    <name evidence="1" type="primary">dapD</name>
    <name type="ordered locus">Mmar10_0454</name>
</gene>
<comment type="catalytic activity">
    <reaction evidence="1">
        <text>(S)-2,3,4,5-tetrahydrodipicolinate + succinyl-CoA + H2O = (S)-2-succinylamino-6-oxoheptanedioate + CoA</text>
        <dbReference type="Rhea" id="RHEA:17325"/>
        <dbReference type="ChEBI" id="CHEBI:15377"/>
        <dbReference type="ChEBI" id="CHEBI:15685"/>
        <dbReference type="ChEBI" id="CHEBI:16845"/>
        <dbReference type="ChEBI" id="CHEBI:57287"/>
        <dbReference type="ChEBI" id="CHEBI:57292"/>
        <dbReference type="EC" id="2.3.1.117"/>
    </reaction>
</comment>
<comment type="pathway">
    <text evidence="1">Amino-acid biosynthesis; L-lysine biosynthesis via DAP pathway; LL-2,6-diaminopimelate from (S)-tetrahydrodipicolinate (succinylase route): step 1/3.</text>
</comment>
<comment type="subunit">
    <text evidence="1">Homotrimer.</text>
</comment>
<comment type="subcellular location">
    <subcellularLocation>
        <location evidence="1">Cytoplasm</location>
    </subcellularLocation>
</comment>
<comment type="similarity">
    <text evidence="1">Belongs to the transferase hexapeptide repeat family.</text>
</comment>